<gene>
    <name evidence="1" type="primary">gmk</name>
    <name type="ordered locus">LJ_1543</name>
</gene>
<organism>
    <name type="scientific">Lactobacillus johnsonii (strain CNCM I-12250 / La1 / NCC 533)</name>
    <dbReference type="NCBI Taxonomy" id="257314"/>
    <lineage>
        <taxon>Bacteria</taxon>
        <taxon>Bacillati</taxon>
        <taxon>Bacillota</taxon>
        <taxon>Bacilli</taxon>
        <taxon>Lactobacillales</taxon>
        <taxon>Lactobacillaceae</taxon>
        <taxon>Lactobacillus</taxon>
    </lineage>
</organism>
<name>KGUA_LACJO</name>
<evidence type="ECO:0000255" key="1">
    <source>
        <dbReference type="HAMAP-Rule" id="MF_00328"/>
    </source>
</evidence>
<protein>
    <recommendedName>
        <fullName evidence="1">Guanylate kinase</fullName>
        <ecNumber evidence="1">2.7.4.8</ecNumber>
    </recommendedName>
    <alternativeName>
        <fullName evidence="1">GMP kinase</fullName>
    </alternativeName>
</protein>
<accession>P60552</accession>
<proteinExistence type="inferred from homology"/>
<comment type="function">
    <text evidence="1">Essential for recycling GMP and indirectly, cGMP.</text>
</comment>
<comment type="catalytic activity">
    <reaction evidence="1">
        <text>GMP + ATP = GDP + ADP</text>
        <dbReference type="Rhea" id="RHEA:20780"/>
        <dbReference type="ChEBI" id="CHEBI:30616"/>
        <dbReference type="ChEBI" id="CHEBI:58115"/>
        <dbReference type="ChEBI" id="CHEBI:58189"/>
        <dbReference type="ChEBI" id="CHEBI:456216"/>
        <dbReference type="EC" id="2.7.4.8"/>
    </reaction>
</comment>
<comment type="subcellular location">
    <subcellularLocation>
        <location evidence="1">Cytoplasm</location>
    </subcellularLocation>
</comment>
<comment type="similarity">
    <text evidence="1">Belongs to the guanylate kinase family.</text>
</comment>
<dbReference type="EC" id="2.7.4.8" evidence="1"/>
<dbReference type="EMBL" id="AE017198">
    <property type="protein sequence ID" value="AAS09311.1"/>
    <property type="molecule type" value="Genomic_DNA"/>
</dbReference>
<dbReference type="RefSeq" id="WP_004897071.1">
    <property type="nucleotide sequence ID" value="NC_005362.1"/>
</dbReference>
<dbReference type="SMR" id="P60552"/>
<dbReference type="GeneID" id="83570130"/>
<dbReference type="KEGG" id="ljo:LJ_1543"/>
<dbReference type="eggNOG" id="COG0194">
    <property type="taxonomic scope" value="Bacteria"/>
</dbReference>
<dbReference type="HOGENOM" id="CLU_001715_1_0_9"/>
<dbReference type="Proteomes" id="UP000000581">
    <property type="component" value="Chromosome"/>
</dbReference>
<dbReference type="GO" id="GO:0005829">
    <property type="term" value="C:cytosol"/>
    <property type="evidence" value="ECO:0007669"/>
    <property type="project" value="TreeGrafter"/>
</dbReference>
<dbReference type="GO" id="GO:0005524">
    <property type="term" value="F:ATP binding"/>
    <property type="evidence" value="ECO:0007669"/>
    <property type="project" value="UniProtKB-UniRule"/>
</dbReference>
<dbReference type="GO" id="GO:0004385">
    <property type="term" value="F:guanylate kinase activity"/>
    <property type="evidence" value="ECO:0007669"/>
    <property type="project" value="UniProtKB-UniRule"/>
</dbReference>
<dbReference type="CDD" id="cd00071">
    <property type="entry name" value="GMPK"/>
    <property type="match status" value="1"/>
</dbReference>
<dbReference type="FunFam" id="3.40.50.300:FF:000855">
    <property type="entry name" value="Guanylate kinase"/>
    <property type="match status" value="1"/>
</dbReference>
<dbReference type="FunFam" id="3.30.63.10:FF:000002">
    <property type="entry name" value="Guanylate kinase 1"/>
    <property type="match status" value="1"/>
</dbReference>
<dbReference type="Gene3D" id="3.30.63.10">
    <property type="entry name" value="Guanylate Kinase phosphate binding domain"/>
    <property type="match status" value="1"/>
</dbReference>
<dbReference type="Gene3D" id="3.40.50.300">
    <property type="entry name" value="P-loop containing nucleotide triphosphate hydrolases"/>
    <property type="match status" value="2"/>
</dbReference>
<dbReference type="HAMAP" id="MF_00328">
    <property type="entry name" value="Guanylate_kinase"/>
    <property type="match status" value="1"/>
</dbReference>
<dbReference type="InterPro" id="IPR008145">
    <property type="entry name" value="GK/Ca_channel_bsu"/>
</dbReference>
<dbReference type="InterPro" id="IPR008144">
    <property type="entry name" value="Guanylate_kin-like_dom"/>
</dbReference>
<dbReference type="InterPro" id="IPR017665">
    <property type="entry name" value="Guanylate_kinase"/>
</dbReference>
<dbReference type="InterPro" id="IPR020590">
    <property type="entry name" value="Guanylate_kinase_CS"/>
</dbReference>
<dbReference type="InterPro" id="IPR027417">
    <property type="entry name" value="P-loop_NTPase"/>
</dbReference>
<dbReference type="NCBIfam" id="TIGR03263">
    <property type="entry name" value="guanyl_kin"/>
    <property type="match status" value="1"/>
</dbReference>
<dbReference type="PANTHER" id="PTHR23117:SF13">
    <property type="entry name" value="GUANYLATE KINASE"/>
    <property type="match status" value="1"/>
</dbReference>
<dbReference type="PANTHER" id="PTHR23117">
    <property type="entry name" value="GUANYLATE KINASE-RELATED"/>
    <property type="match status" value="1"/>
</dbReference>
<dbReference type="Pfam" id="PF00625">
    <property type="entry name" value="Guanylate_kin"/>
    <property type="match status" value="1"/>
</dbReference>
<dbReference type="SMART" id="SM00072">
    <property type="entry name" value="GuKc"/>
    <property type="match status" value="1"/>
</dbReference>
<dbReference type="SUPFAM" id="SSF52540">
    <property type="entry name" value="P-loop containing nucleoside triphosphate hydrolases"/>
    <property type="match status" value="1"/>
</dbReference>
<dbReference type="PROSITE" id="PS00856">
    <property type="entry name" value="GUANYLATE_KINASE_1"/>
    <property type="match status" value="1"/>
</dbReference>
<dbReference type="PROSITE" id="PS50052">
    <property type="entry name" value="GUANYLATE_KINASE_2"/>
    <property type="match status" value="1"/>
</dbReference>
<feature type="chain" id="PRO_0000170550" description="Guanylate kinase">
    <location>
        <begin position="1"/>
        <end position="204"/>
    </location>
</feature>
<feature type="domain" description="Guanylate kinase-like" evidence="1">
    <location>
        <begin position="5"/>
        <end position="184"/>
    </location>
</feature>
<feature type="binding site" evidence="1">
    <location>
        <begin position="12"/>
        <end position="19"/>
    </location>
    <ligand>
        <name>ATP</name>
        <dbReference type="ChEBI" id="CHEBI:30616"/>
    </ligand>
</feature>
<keyword id="KW-0067">ATP-binding</keyword>
<keyword id="KW-0963">Cytoplasm</keyword>
<keyword id="KW-0418">Kinase</keyword>
<keyword id="KW-0547">Nucleotide-binding</keyword>
<keyword id="KW-0808">Transferase</keyword>
<reference key="1">
    <citation type="journal article" date="2004" name="Proc. Natl. Acad. Sci. U.S.A.">
        <title>The genome sequence of the probiotic intestinal bacterium Lactobacillus johnsonii NCC 533.</title>
        <authorList>
            <person name="Pridmore R.D."/>
            <person name="Berger B."/>
            <person name="Desiere F."/>
            <person name="Vilanova D."/>
            <person name="Barretto C."/>
            <person name="Pittet A.-C."/>
            <person name="Zwahlen M.-C."/>
            <person name="Rouvet M."/>
            <person name="Altermann E."/>
            <person name="Barrangou R."/>
            <person name="Mollet B."/>
            <person name="Mercenier A."/>
            <person name="Klaenhammer T."/>
            <person name="Arigoni F."/>
            <person name="Schell M.A."/>
        </authorList>
    </citation>
    <scope>NUCLEOTIDE SEQUENCE [LARGE SCALE GENOMIC DNA]</scope>
    <source>
        <strain>CNCM I-1225 / La1 / NCC 533</strain>
    </source>
</reference>
<sequence length="204" mass="23086">MAHQGLLLVLSGPSGVGKGTVKSAMVKQKAFSFEYSVSMTTRKPRPGEVNGKDYYFVSEDRFQEAIKGNELLEYNEYVGNHYGTPLAPVQKMLNEGKDVLLEIDVNGAKQVRKLMPDGVFIFLTPPDLHELKHRIVNRGTDSDKVIAMRMKQARKEILMMEDYDYAVVNDTVANAVDHIKSIVEAEHVRVPRVINDYRNMVKED</sequence>